<proteinExistence type="inferred from homology"/>
<reference key="1">
    <citation type="journal article" date="2005" name="Nature">
        <title>The genome of the social amoeba Dictyostelium discoideum.</title>
        <authorList>
            <person name="Eichinger L."/>
            <person name="Pachebat J.A."/>
            <person name="Gloeckner G."/>
            <person name="Rajandream M.A."/>
            <person name="Sucgang R."/>
            <person name="Berriman M."/>
            <person name="Song J."/>
            <person name="Olsen R."/>
            <person name="Szafranski K."/>
            <person name="Xu Q."/>
            <person name="Tunggal B."/>
            <person name="Kummerfeld S."/>
            <person name="Madera M."/>
            <person name="Konfortov B.A."/>
            <person name="Rivero F."/>
            <person name="Bankier A.T."/>
            <person name="Lehmann R."/>
            <person name="Hamlin N."/>
            <person name="Davies R."/>
            <person name="Gaudet P."/>
            <person name="Fey P."/>
            <person name="Pilcher K."/>
            <person name="Chen G."/>
            <person name="Saunders D."/>
            <person name="Sodergren E.J."/>
            <person name="Davis P."/>
            <person name="Kerhornou A."/>
            <person name="Nie X."/>
            <person name="Hall N."/>
            <person name="Anjard C."/>
            <person name="Hemphill L."/>
            <person name="Bason N."/>
            <person name="Farbrother P."/>
            <person name="Desany B."/>
            <person name="Just E."/>
            <person name="Morio T."/>
            <person name="Rost R."/>
            <person name="Churcher C.M."/>
            <person name="Cooper J."/>
            <person name="Haydock S."/>
            <person name="van Driessche N."/>
            <person name="Cronin A."/>
            <person name="Goodhead I."/>
            <person name="Muzny D.M."/>
            <person name="Mourier T."/>
            <person name="Pain A."/>
            <person name="Lu M."/>
            <person name="Harper D."/>
            <person name="Lindsay R."/>
            <person name="Hauser H."/>
            <person name="James K.D."/>
            <person name="Quiles M."/>
            <person name="Madan Babu M."/>
            <person name="Saito T."/>
            <person name="Buchrieser C."/>
            <person name="Wardroper A."/>
            <person name="Felder M."/>
            <person name="Thangavelu M."/>
            <person name="Johnson D."/>
            <person name="Knights A."/>
            <person name="Loulseged H."/>
            <person name="Mungall K.L."/>
            <person name="Oliver K."/>
            <person name="Price C."/>
            <person name="Quail M.A."/>
            <person name="Urushihara H."/>
            <person name="Hernandez J."/>
            <person name="Rabbinowitsch E."/>
            <person name="Steffen D."/>
            <person name="Sanders M."/>
            <person name="Ma J."/>
            <person name="Kohara Y."/>
            <person name="Sharp S."/>
            <person name="Simmonds M.N."/>
            <person name="Spiegler S."/>
            <person name="Tivey A."/>
            <person name="Sugano S."/>
            <person name="White B."/>
            <person name="Walker D."/>
            <person name="Woodward J.R."/>
            <person name="Winckler T."/>
            <person name="Tanaka Y."/>
            <person name="Shaulsky G."/>
            <person name="Schleicher M."/>
            <person name="Weinstock G.M."/>
            <person name="Rosenthal A."/>
            <person name="Cox E.C."/>
            <person name="Chisholm R.L."/>
            <person name="Gibbs R.A."/>
            <person name="Loomis W.F."/>
            <person name="Platzer M."/>
            <person name="Kay R.R."/>
            <person name="Williams J.G."/>
            <person name="Dear P.H."/>
            <person name="Noegel A.A."/>
            <person name="Barrell B.G."/>
            <person name="Kuspa A."/>
        </authorList>
    </citation>
    <scope>NUCLEOTIDE SEQUENCE [LARGE SCALE GENOMIC DNA]</scope>
    <source>
        <strain>AX4</strain>
    </source>
</reference>
<dbReference type="EMBL" id="AAFI02000112">
    <property type="protein sequence ID" value="EAL63194.1"/>
    <property type="molecule type" value="Genomic_DNA"/>
</dbReference>
<dbReference type="RefSeq" id="XP_636696.1">
    <property type="nucleotide sequence ID" value="XM_631604.1"/>
</dbReference>
<dbReference type="SMR" id="Q54IV7"/>
<dbReference type="FunCoup" id="Q54IV7">
    <property type="interactions" value="707"/>
</dbReference>
<dbReference type="STRING" id="44689.Q54IV7"/>
<dbReference type="GlyCosmos" id="Q54IV7">
    <property type="glycosylation" value="3 sites, No reported glycans"/>
</dbReference>
<dbReference type="GlyGen" id="Q54IV7">
    <property type="glycosylation" value="3 sites"/>
</dbReference>
<dbReference type="PaxDb" id="44689-DDB0305027"/>
<dbReference type="EnsemblProtists" id="EAL63194">
    <property type="protein sequence ID" value="EAL63194"/>
    <property type="gene ID" value="DDB_G0288491"/>
</dbReference>
<dbReference type="GeneID" id="8626653"/>
<dbReference type="KEGG" id="ddi:DDB_G0288491"/>
<dbReference type="dictyBase" id="DDB_G0288491">
    <property type="gene designation" value="rft1"/>
</dbReference>
<dbReference type="VEuPathDB" id="AmoebaDB:DDB_G0288491"/>
<dbReference type="eggNOG" id="KOG2864">
    <property type="taxonomic scope" value="Eukaryota"/>
</dbReference>
<dbReference type="HOGENOM" id="CLU_023360_5_0_1"/>
<dbReference type="InParanoid" id="Q54IV7"/>
<dbReference type="OMA" id="WPGKLFG"/>
<dbReference type="PhylomeDB" id="Q54IV7"/>
<dbReference type="UniPathway" id="UPA00378"/>
<dbReference type="PRO" id="PR:Q54IV7"/>
<dbReference type="Proteomes" id="UP000002195">
    <property type="component" value="Chromosome 5"/>
</dbReference>
<dbReference type="GO" id="GO:0005789">
    <property type="term" value="C:endoplasmic reticulum membrane"/>
    <property type="evidence" value="ECO:0000318"/>
    <property type="project" value="GO_Central"/>
</dbReference>
<dbReference type="GO" id="GO:0006488">
    <property type="term" value="P:dolichol-linked oligosaccharide biosynthetic process"/>
    <property type="evidence" value="ECO:0000250"/>
    <property type="project" value="UniProtKB"/>
</dbReference>
<dbReference type="GO" id="GO:0034203">
    <property type="term" value="P:glycolipid translocation"/>
    <property type="evidence" value="ECO:0000250"/>
    <property type="project" value="UniProtKB"/>
</dbReference>
<dbReference type="GO" id="GO:0006487">
    <property type="term" value="P:protein N-linked glycosylation"/>
    <property type="evidence" value="ECO:0000250"/>
    <property type="project" value="UniProtKB"/>
</dbReference>
<dbReference type="InterPro" id="IPR007594">
    <property type="entry name" value="RFT1"/>
</dbReference>
<dbReference type="PANTHER" id="PTHR13117">
    <property type="entry name" value="ENDOPLASMIC RETICULUM MULTISPAN TRANSMEMBRANE PROTEIN-RELATED"/>
    <property type="match status" value="1"/>
</dbReference>
<dbReference type="PANTHER" id="PTHR13117:SF5">
    <property type="entry name" value="PROTEIN RFT1 HOMOLOG"/>
    <property type="match status" value="1"/>
</dbReference>
<dbReference type="Pfam" id="PF04506">
    <property type="entry name" value="Rft-1"/>
    <property type="match status" value="1"/>
</dbReference>
<organism>
    <name type="scientific">Dictyostelium discoideum</name>
    <name type="common">Social amoeba</name>
    <dbReference type="NCBI Taxonomy" id="44689"/>
    <lineage>
        <taxon>Eukaryota</taxon>
        <taxon>Amoebozoa</taxon>
        <taxon>Evosea</taxon>
        <taxon>Eumycetozoa</taxon>
        <taxon>Dictyostelia</taxon>
        <taxon>Dictyosteliales</taxon>
        <taxon>Dictyosteliaceae</taxon>
        <taxon>Dictyostelium</taxon>
    </lineage>
</organism>
<comment type="function">
    <text evidence="1 2">Intramembrane glycolipid transporter that operates in the biosynthetic pathway of dolichol-linked oligosaccharides, the glycan precursors employed in protein asparagine (N)-glycosylation. The sequential addition of sugars to dolichol pyrophosphate produces dolichol-linked oligosaccharides containing fourteen sugars, including two GlcNAcs, nine mannoses and three glucoses. Once assembled, the oligosaccharide is transferred from the lipid to nascent proteins by oligosaccharyltransferases. The assembly of dolichol-linked oligosaccharides begins on the cytosolic side of the endoplasmic reticulum membrane and finishes in its lumen. RFT1 could mediate the translocation of the cytosolically oriented intermediate DolPP-GlcNAc2Man5, produced by ALG11, into the ER lumen where dolichol-linked oligosaccharides assembly continues (By similarity). However, the intramembrane lipid transporter activity could not be confirmed in vitro (By similarity).</text>
</comment>
<comment type="pathway">
    <text evidence="2">Protein modification; protein glycosylation.</text>
</comment>
<comment type="subcellular location">
    <subcellularLocation>
        <location evidence="1">Endoplasmic reticulum membrane</location>
        <topology evidence="3">Multi-pass membrane protein</topology>
    </subcellularLocation>
</comment>
<comment type="similarity">
    <text evidence="5">Belongs to the RFT1 family.</text>
</comment>
<sequence>MKQPQTESNVLKNGLVGAFYLIGLQIISRLFTFIINTLVIVGVDDSIFGVSAIQYQLLSSIILFLSREAIRRACTRVNITDKLNNDNNLKSVINLSWLVLPIGIGLSIIFENFFLYTSTKETLEILNYHYGLRLFTISSILELLSEPMYILAQNLLLFKIRTTVEGFALFFKTFSTYYFIVILNMGLIGFGYAQILYSLTLVIGYFGYFLINIINNNKNKDNKEFSNCFKSIDQLFPKFSTRIDRNLIKLSLLYTWQSIYKLLLQEGEKFVLFFSETNQGQAIFAIVSNLGSLIVRFLFLPIEETCFLMFPKLFPTINNNNNNNNNNNNNNNNNNKNQENNNNNDDFKNGANVLIVIMKFLILVSLVFTCFGPGFSHLLLNLLYNNKFRDTNAGVLLGFYCIYVGFLAINGVSESFVHSVAKEDQLKTVNWVLIIIGFIYLLFTLIFCKLFQNIGIILANCLNIKLSNMIPNKMVLLSFIISFIITNLSNKYIYNAVSFKSTCIHLLIGIICFIQTCTFIYLKEWVSIKEFKKILSNKNK</sequence>
<protein>
    <recommendedName>
        <fullName evidence="2">Man(5)GlcNAc(2)-PP-dolichol translocation protein RFT1</fullName>
    </recommendedName>
    <alternativeName>
        <fullName evidence="2">Protein RFT1 homolog</fullName>
    </alternativeName>
</protein>
<keyword id="KW-0256">Endoplasmic reticulum</keyword>
<keyword id="KW-0325">Glycoprotein</keyword>
<keyword id="KW-0472">Membrane</keyword>
<keyword id="KW-1185">Reference proteome</keyword>
<keyword id="KW-0812">Transmembrane</keyword>
<keyword id="KW-1133">Transmembrane helix</keyword>
<accession>Q54IV7</accession>
<gene>
    <name type="primary">rft1</name>
    <name type="ORF">DDB_G0288491</name>
</gene>
<evidence type="ECO:0000250" key="1">
    <source>
        <dbReference type="UniProtKB" id="P38206"/>
    </source>
</evidence>
<evidence type="ECO:0000250" key="2">
    <source>
        <dbReference type="UniProtKB" id="Q96AA3"/>
    </source>
</evidence>
<evidence type="ECO:0000255" key="3"/>
<evidence type="ECO:0000256" key="4">
    <source>
        <dbReference type="SAM" id="MobiDB-lite"/>
    </source>
</evidence>
<evidence type="ECO:0000305" key="5"/>
<feature type="chain" id="PRO_0000328237" description="Man(5)GlcNAc(2)-PP-dolichol translocation protein RFT1">
    <location>
        <begin position="1"/>
        <end position="540"/>
    </location>
</feature>
<feature type="transmembrane region" description="Helical" evidence="3">
    <location>
        <begin position="15"/>
        <end position="35"/>
    </location>
</feature>
<feature type="transmembrane region" description="Helical" evidence="3">
    <location>
        <begin position="46"/>
        <end position="66"/>
    </location>
</feature>
<feature type="transmembrane region" description="Helical" evidence="3">
    <location>
        <begin position="95"/>
        <end position="115"/>
    </location>
</feature>
<feature type="transmembrane region" description="Helical" evidence="3">
    <location>
        <begin position="140"/>
        <end position="160"/>
    </location>
</feature>
<feature type="transmembrane region" description="Helical" evidence="3">
    <location>
        <begin position="166"/>
        <end position="188"/>
    </location>
</feature>
<feature type="transmembrane region" description="Helical" evidence="3">
    <location>
        <begin position="192"/>
        <end position="214"/>
    </location>
</feature>
<feature type="transmembrane region" description="Helical" evidence="3">
    <location>
        <begin position="282"/>
        <end position="302"/>
    </location>
</feature>
<feature type="transmembrane region" description="Helical" evidence="3">
    <location>
        <begin position="353"/>
        <end position="373"/>
    </location>
</feature>
<feature type="transmembrane region" description="Helical" evidence="3">
    <location>
        <begin position="393"/>
        <end position="413"/>
    </location>
</feature>
<feature type="transmembrane region" description="Helical" evidence="3">
    <location>
        <begin position="431"/>
        <end position="451"/>
    </location>
</feature>
<feature type="transmembrane region" description="Helical" evidence="3">
    <location>
        <begin position="466"/>
        <end position="486"/>
    </location>
</feature>
<feature type="transmembrane region" description="Helical" evidence="3">
    <location>
        <begin position="502"/>
        <end position="522"/>
    </location>
</feature>
<feature type="region of interest" description="Disordered" evidence="4">
    <location>
        <begin position="321"/>
        <end position="343"/>
    </location>
</feature>
<feature type="glycosylation site" description="N-linked (GlcNAc...) asparagine" evidence="3">
    <location>
        <position position="78"/>
    </location>
</feature>
<feature type="glycosylation site" description="N-linked (GlcNAc...) asparagine" evidence="3">
    <location>
        <position position="94"/>
    </location>
</feature>
<feature type="glycosylation site" description="N-linked (GlcNAc...) asparagine" evidence="3">
    <location>
        <position position="487"/>
    </location>
</feature>
<name>RFT1_DICDI</name>